<protein>
    <recommendedName>
        <fullName evidence="1">Phosphoglycerate kinase</fullName>
        <ecNumber evidence="1">2.7.2.3</ecNumber>
    </recommendedName>
</protein>
<comment type="catalytic activity">
    <reaction evidence="1">
        <text>(2R)-3-phosphoglycerate + ATP = (2R)-3-phospho-glyceroyl phosphate + ADP</text>
        <dbReference type="Rhea" id="RHEA:14801"/>
        <dbReference type="ChEBI" id="CHEBI:30616"/>
        <dbReference type="ChEBI" id="CHEBI:57604"/>
        <dbReference type="ChEBI" id="CHEBI:58272"/>
        <dbReference type="ChEBI" id="CHEBI:456216"/>
        <dbReference type="EC" id="2.7.2.3"/>
    </reaction>
</comment>
<comment type="pathway">
    <text evidence="1">Carbohydrate degradation; glycolysis; pyruvate from D-glyceraldehyde 3-phosphate: step 2/5.</text>
</comment>
<comment type="subunit">
    <text evidence="1">Monomer.</text>
</comment>
<comment type="subcellular location">
    <subcellularLocation>
        <location evidence="1">Cytoplasm</location>
    </subcellularLocation>
</comment>
<comment type="similarity">
    <text evidence="1">Belongs to the phosphoglycerate kinase family.</text>
</comment>
<dbReference type="EC" id="2.7.2.3" evidence="1"/>
<dbReference type="EMBL" id="BX897700">
    <property type="protein sequence ID" value="CAF26658.1"/>
    <property type="molecule type" value="Genomic_DNA"/>
</dbReference>
<dbReference type="RefSeq" id="WP_011179831.1">
    <property type="nucleotide sequence ID" value="NC_005955.1"/>
</dbReference>
<dbReference type="SMR" id="Q6FYN4"/>
<dbReference type="KEGG" id="bqu:BQ11990"/>
<dbReference type="eggNOG" id="COG0126">
    <property type="taxonomic scope" value="Bacteria"/>
</dbReference>
<dbReference type="HOGENOM" id="CLU_025427_0_2_5"/>
<dbReference type="OrthoDB" id="9808460at2"/>
<dbReference type="UniPathway" id="UPA00109">
    <property type="reaction ID" value="UER00185"/>
</dbReference>
<dbReference type="Proteomes" id="UP000000597">
    <property type="component" value="Chromosome"/>
</dbReference>
<dbReference type="GO" id="GO:0005829">
    <property type="term" value="C:cytosol"/>
    <property type="evidence" value="ECO:0007669"/>
    <property type="project" value="TreeGrafter"/>
</dbReference>
<dbReference type="GO" id="GO:0043531">
    <property type="term" value="F:ADP binding"/>
    <property type="evidence" value="ECO:0007669"/>
    <property type="project" value="TreeGrafter"/>
</dbReference>
<dbReference type="GO" id="GO:0005524">
    <property type="term" value="F:ATP binding"/>
    <property type="evidence" value="ECO:0007669"/>
    <property type="project" value="UniProtKB-KW"/>
</dbReference>
<dbReference type="GO" id="GO:0004618">
    <property type="term" value="F:phosphoglycerate kinase activity"/>
    <property type="evidence" value="ECO:0007669"/>
    <property type="project" value="UniProtKB-UniRule"/>
</dbReference>
<dbReference type="GO" id="GO:0006094">
    <property type="term" value="P:gluconeogenesis"/>
    <property type="evidence" value="ECO:0007669"/>
    <property type="project" value="TreeGrafter"/>
</dbReference>
<dbReference type="GO" id="GO:0006096">
    <property type="term" value="P:glycolytic process"/>
    <property type="evidence" value="ECO:0007669"/>
    <property type="project" value="UniProtKB-UniRule"/>
</dbReference>
<dbReference type="CDD" id="cd00318">
    <property type="entry name" value="Phosphoglycerate_kinase"/>
    <property type="match status" value="1"/>
</dbReference>
<dbReference type="FunFam" id="3.40.50.1260:FF:000001">
    <property type="entry name" value="Phosphoglycerate kinase"/>
    <property type="match status" value="1"/>
</dbReference>
<dbReference type="FunFam" id="3.40.50.1260:FF:000006">
    <property type="entry name" value="Phosphoglycerate kinase"/>
    <property type="match status" value="1"/>
</dbReference>
<dbReference type="Gene3D" id="3.40.50.1260">
    <property type="entry name" value="Phosphoglycerate kinase, N-terminal domain"/>
    <property type="match status" value="2"/>
</dbReference>
<dbReference type="HAMAP" id="MF_00145">
    <property type="entry name" value="Phosphoglyc_kinase"/>
    <property type="match status" value="1"/>
</dbReference>
<dbReference type="InterPro" id="IPR001576">
    <property type="entry name" value="Phosphoglycerate_kinase"/>
</dbReference>
<dbReference type="InterPro" id="IPR015911">
    <property type="entry name" value="Phosphoglycerate_kinase_CS"/>
</dbReference>
<dbReference type="InterPro" id="IPR015824">
    <property type="entry name" value="Phosphoglycerate_kinase_N"/>
</dbReference>
<dbReference type="InterPro" id="IPR036043">
    <property type="entry name" value="Phosphoglycerate_kinase_sf"/>
</dbReference>
<dbReference type="PANTHER" id="PTHR11406">
    <property type="entry name" value="PHOSPHOGLYCERATE KINASE"/>
    <property type="match status" value="1"/>
</dbReference>
<dbReference type="PANTHER" id="PTHR11406:SF23">
    <property type="entry name" value="PHOSPHOGLYCERATE KINASE 1, CHLOROPLASTIC-RELATED"/>
    <property type="match status" value="1"/>
</dbReference>
<dbReference type="Pfam" id="PF00162">
    <property type="entry name" value="PGK"/>
    <property type="match status" value="1"/>
</dbReference>
<dbReference type="PIRSF" id="PIRSF000724">
    <property type="entry name" value="Pgk"/>
    <property type="match status" value="1"/>
</dbReference>
<dbReference type="PRINTS" id="PR00477">
    <property type="entry name" value="PHGLYCKINASE"/>
</dbReference>
<dbReference type="SUPFAM" id="SSF53748">
    <property type="entry name" value="Phosphoglycerate kinase"/>
    <property type="match status" value="1"/>
</dbReference>
<dbReference type="PROSITE" id="PS00111">
    <property type="entry name" value="PGLYCERATE_KINASE"/>
    <property type="match status" value="1"/>
</dbReference>
<sequence>MGFRTLDDVDVTGKRVLVRVDFNVPMSQGKVCDETRLKRHKETLLELQKRGAKLILLSHCGRPKGQGEPEFSLRPVVRVLEKIINQPVAFAPDCVGVAAQTAIEALQNGGLLLLENVRFHPGEEKNDCSFAEALAHNGDLYVNDAFSVSHRAHASVEGITHLLPSYAGRSLQCELQALEKGLDNPKRPVVALVGGAKVSSKLFVLNHLVEKVDYLVIGGGMANSFLAAQGVHIGKSLCEHALMQTIKKVIEKAQEYQCTLLLPVDAVVGFRFEKGAPHRLYDIGDIPDDGMILDIGTRSIAHINEVIDKAATLVWNGPLGVFEMSPFDQGTIAVARHAAECSLTGKCVSIAGGGDTVFALNHAGVANDFTYLSTAGGAFLEWMEGKVLPGIFALRQA</sequence>
<reference key="1">
    <citation type="journal article" date="2004" name="Proc. Natl. Acad. Sci. U.S.A.">
        <title>The louse-borne human pathogen Bartonella quintana is a genomic derivative of the zoonotic agent Bartonella henselae.</title>
        <authorList>
            <person name="Alsmark U.C.M."/>
            <person name="Frank A.C."/>
            <person name="Karlberg E.O."/>
            <person name="Legault B.-A."/>
            <person name="Ardell D.H."/>
            <person name="Canbaeck B."/>
            <person name="Eriksson A.-S."/>
            <person name="Naeslund A.K."/>
            <person name="Handley S.A."/>
            <person name="Huvet M."/>
            <person name="La Scola B."/>
            <person name="Holmberg M."/>
            <person name="Andersson S.G.E."/>
        </authorList>
    </citation>
    <scope>NUCLEOTIDE SEQUENCE [LARGE SCALE GENOMIC DNA]</scope>
    <source>
        <strain>Toulouse</strain>
    </source>
</reference>
<evidence type="ECO:0000255" key="1">
    <source>
        <dbReference type="HAMAP-Rule" id="MF_00145"/>
    </source>
</evidence>
<organism>
    <name type="scientific">Bartonella quintana (strain Toulouse)</name>
    <name type="common">Rochalimaea quintana</name>
    <dbReference type="NCBI Taxonomy" id="283165"/>
    <lineage>
        <taxon>Bacteria</taxon>
        <taxon>Pseudomonadati</taxon>
        <taxon>Pseudomonadota</taxon>
        <taxon>Alphaproteobacteria</taxon>
        <taxon>Hyphomicrobiales</taxon>
        <taxon>Bartonellaceae</taxon>
        <taxon>Bartonella</taxon>
    </lineage>
</organism>
<keyword id="KW-0067">ATP-binding</keyword>
<keyword id="KW-0963">Cytoplasm</keyword>
<keyword id="KW-0324">Glycolysis</keyword>
<keyword id="KW-0418">Kinase</keyword>
<keyword id="KW-0547">Nucleotide-binding</keyword>
<keyword id="KW-0808">Transferase</keyword>
<name>PGK_BARQU</name>
<feature type="chain" id="PRO_1000057970" description="Phosphoglycerate kinase">
    <location>
        <begin position="1"/>
        <end position="397"/>
    </location>
</feature>
<feature type="binding site" evidence="1">
    <location>
        <begin position="21"/>
        <end position="23"/>
    </location>
    <ligand>
        <name>substrate</name>
    </ligand>
</feature>
<feature type="binding site" evidence="1">
    <location>
        <position position="36"/>
    </location>
    <ligand>
        <name>substrate</name>
    </ligand>
</feature>
<feature type="binding site" evidence="1">
    <location>
        <begin position="59"/>
        <end position="62"/>
    </location>
    <ligand>
        <name>substrate</name>
    </ligand>
</feature>
<feature type="binding site" evidence="1">
    <location>
        <position position="118"/>
    </location>
    <ligand>
        <name>substrate</name>
    </ligand>
</feature>
<feature type="binding site" evidence="1">
    <location>
        <position position="151"/>
    </location>
    <ligand>
        <name>substrate</name>
    </ligand>
</feature>
<feature type="binding site" evidence="1">
    <location>
        <position position="201"/>
    </location>
    <ligand>
        <name>ATP</name>
        <dbReference type="ChEBI" id="CHEBI:30616"/>
    </ligand>
</feature>
<feature type="binding site" evidence="1">
    <location>
        <position position="323"/>
    </location>
    <ligand>
        <name>ATP</name>
        <dbReference type="ChEBI" id="CHEBI:30616"/>
    </ligand>
</feature>
<feature type="binding site" evidence="1">
    <location>
        <begin position="353"/>
        <end position="356"/>
    </location>
    <ligand>
        <name>ATP</name>
        <dbReference type="ChEBI" id="CHEBI:30616"/>
    </ligand>
</feature>
<accession>Q6FYN4</accession>
<proteinExistence type="inferred from homology"/>
<gene>
    <name evidence="1" type="primary">pgk</name>
    <name type="ordered locus">BQ11990</name>
</gene>